<keyword id="KW-0002">3D-structure</keyword>
<keyword id="KW-0903">Direct protein sequencing</keyword>
<keyword id="KW-0378">Hydrolase</keyword>
<keyword id="KW-0964">Secreted</keyword>
<keyword id="KW-0719">Serine esterase</keyword>
<protein>
    <recommendedName>
        <fullName evidence="6">Carboxylesterase</fullName>
        <ecNumber>3.1.1.1</ecNumber>
    </recommendedName>
</protein>
<evidence type="ECO:0000250" key="1">
    <source>
        <dbReference type="UniProtKB" id="P21836"/>
    </source>
</evidence>
<evidence type="ECO:0000250" key="2">
    <source>
        <dbReference type="UniProtKB" id="P37967"/>
    </source>
</evidence>
<evidence type="ECO:0000255" key="3"/>
<evidence type="ECO:0000255" key="4">
    <source>
        <dbReference type="PROSITE-ProRule" id="PRU10039"/>
    </source>
</evidence>
<evidence type="ECO:0000269" key="5">
    <source ref="1"/>
</evidence>
<evidence type="ECO:0000303" key="6">
    <source ref="1"/>
</evidence>
<evidence type="ECO:0000305" key="7"/>
<evidence type="ECO:0007829" key="8">
    <source>
        <dbReference type="PDB" id="7W1J"/>
    </source>
</evidence>
<evidence type="ECO:0007829" key="9">
    <source>
        <dbReference type="PDB" id="7W1K"/>
    </source>
</evidence>
<name>EST1_THEFU</name>
<dbReference type="EC" id="3.1.1.1"/>
<dbReference type="PDB" id="7W1I">
    <property type="method" value="X-ray"/>
    <property type="resolution" value="1.67 A"/>
    <property type="chains" value="A=1-497"/>
</dbReference>
<dbReference type="PDB" id="7W1J">
    <property type="method" value="X-ray"/>
    <property type="resolution" value="1.92 A"/>
    <property type="chains" value="A=1-497"/>
</dbReference>
<dbReference type="PDB" id="7W1K">
    <property type="method" value="X-ray"/>
    <property type="resolution" value="1.39 A"/>
    <property type="chains" value="A=1-497"/>
</dbReference>
<dbReference type="PDB" id="7W1L">
    <property type="method" value="X-ray"/>
    <property type="resolution" value="2.44 A"/>
    <property type="chains" value="A=1-497"/>
</dbReference>
<dbReference type="PDBsum" id="7W1I"/>
<dbReference type="PDBsum" id="7W1J"/>
<dbReference type="PDBsum" id="7W1K"/>
<dbReference type="PDBsum" id="7W1L"/>
<dbReference type="SMR" id="P86325"/>
<dbReference type="ESTHER" id="thefu-1831">
    <property type="family name" value="Carb_B_Bacteria"/>
</dbReference>
<dbReference type="GO" id="GO:0005576">
    <property type="term" value="C:extracellular region"/>
    <property type="evidence" value="ECO:0000314"/>
    <property type="project" value="UniProtKB"/>
</dbReference>
<dbReference type="GO" id="GO:0106435">
    <property type="term" value="F:carboxylesterase activity"/>
    <property type="evidence" value="ECO:0000314"/>
    <property type="project" value="UniProtKB"/>
</dbReference>
<dbReference type="FunFam" id="3.40.50.1820:FF:000799">
    <property type="entry name" value="Carboxylesterase"/>
    <property type="match status" value="1"/>
</dbReference>
<dbReference type="Gene3D" id="3.40.50.1820">
    <property type="entry name" value="alpha/beta hydrolase"/>
    <property type="match status" value="1"/>
</dbReference>
<dbReference type="InterPro" id="IPR029058">
    <property type="entry name" value="AB_hydrolase_fold"/>
</dbReference>
<dbReference type="InterPro" id="IPR002018">
    <property type="entry name" value="CarbesteraseB"/>
</dbReference>
<dbReference type="InterPro" id="IPR019826">
    <property type="entry name" value="Carboxylesterase_B_AS"/>
</dbReference>
<dbReference type="InterPro" id="IPR050309">
    <property type="entry name" value="Type-B_Carboxylest/Lipase"/>
</dbReference>
<dbReference type="PANTHER" id="PTHR11559">
    <property type="entry name" value="CARBOXYLESTERASE"/>
    <property type="match status" value="1"/>
</dbReference>
<dbReference type="Pfam" id="PF00135">
    <property type="entry name" value="COesterase"/>
    <property type="match status" value="1"/>
</dbReference>
<dbReference type="SUPFAM" id="SSF53474">
    <property type="entry name" value="alpha/beta-Hydrolases"/>
    <property type="match status" value="1"/>
</dbReference>
<dbReference type="PROSITE" id="PS00122">
    <property type="entry name" value="CARBOXYLESTERASE_B_1"/>
    <property type="match status" value="1"/>
</dbReference>
<sequence length="497" mass="52941">MEIVIRTGSGDVRGSKENGIAVFRGIPYAEPPVGAHRFTAPRPPRPWDGVRDATEFSATAPRPPYPEAIGALLIERFIPGDDYLTLNVWTPDPNAVGLPVMVWIHGGAFTNGSGSEPVYDGAAFARDGVVFVSFNYRLGIIGFADLPDAPSNRGLLDQIAALEWVRDNIARFGGDPGNVTVFGESAGAMSVCTLMATPRARGLFRRAILQSGAGNMAVAAEDATTIAAVIAHRLGVEPTAAALAHVPVAQLLDVQQQVAQEIQGAPDPAVWGERIAGGSVLLPFAPVIDGELLSQRPAEAIAGGAGHDVDLLFGTTTDEYRLFLAPTGLLPFITSDYVTAHLAKSGLDADAAKAYTAEGRGEEPGDILASIITDQVFRIPALRIAESRVDAPARTFGYEFAWRTPQLDGILGACHAVELPFVFRTLDRAASLVGTNPPEELAETVHNAWVRFATSGDPGWPAWNPETRSVMRFDHPVSEMVTDPYPATRALWDGVPL</sequence>
<accession>P86325</accession>
<reference evidence="7" key="1">
    <citation type="submission" date="2009-06" db="UniProtKB">
        <title>Hydrolysis of cyclic poly(ethylene terephthalate) trimers by a carboxylesterase from Thermobifida fusca KW3.</title>
        <authorList>
            <person name="Billig S."/>
            <person name="Oeser T."/>
            <person name="Birkemeyer C."/>
            <person name="Zimmermann W."/>
        </authorList>
    </citation>
    <scope>NUCLEOTIDE SEQUENCE [GENOMIC DNA]</scope>
    <scope>PARTIAL PROTEIN SEQUENCE</scope>
    <scope>CATALYTIC ACTIVITY</scope>
    <scope>BIOPHYSICOCHEMICAL PROPERTIES</scope>
    <scope>SUBCELLULAR LOCATION</scope>
    <source>
        <strain evidence="5">KW3</strain>
    </source>
</reference>
<organism>
    <name type="scientific">Thermobifida fusca</name>
    <name type="common">Thermomonospora fusca</name>
    <dbReference type="NCBI Taxonomy" id="2021"/>
    <lineage>
        <taxon>Bacteria</taxon>
        <taxon>Bacillati</taxon>
        <taxon>Actinomycetota</taxon>
        <taxon>Actinomycetes</taxon>
        <taxon>Streptosporangiales</taxon>
        <taxon>Nocardiopsidaceae</taxon>
        <taxon>Thermobifida</taxon>
    </lineage>
</organism>
<proteinExistence type="evidence at protein level"/>
<feature type="chain" id="PRO_0000379928" description="Carboxylesterase">
    <location>
        <begin position="1"/>
        <end position="497"/>
    </location>
</feature>
<feature type="active site" description="Acyl-ester intermediate" evidence="1 4">
    <location>
        <position position="185"/>
    </location>
</feature>
<feature type="active site" description="Charge relay system" evidence="1">
    <location>
        <position position="319"/>
    </location>
</feature>
<feature type="active site" description="Charge relay system" evidence="2">
    <location>
        <position position="415"/>
    </location>
</feature>
<feature type="strand" evidence="9">
    <location>
        <begin position="2"/>
        <end position="6"/>
    </location>
</feature>
<feature type="strand" evidence="9">
    <location>
        <begin position="8"/>
        <end position="16"/>
    </location>
</feature>
<feature type="strand" evidence="9">
    <location>
        <begin position="21"/>
        <end position="29"/>
    </location>
</feature>
<feature type="helix" evidence="9">
    <location>
        <begin position="34"/>
        <end position="37"/>
    </location>
</feature>
<feature type="strand" evidence="9">
    <location>
        <begin position="48"/>
        <end position="52"/>
    </location>
</feature>
<feature type="helix" evidence="9">
    <location>
        <begin position="67"/>
        <end position="72"/>
    </location>
</feature>
<feature type="strand" evidence="9">
    <location>
        <begin position="85"/>
        <end position="91"/>
    </location>
</feature>
<feature type="strand" evidence="9">
    <location>
        <begin position="96"/>
        <end position="104"/>
    </location>
</feature>
<feature type="turn" evidence="9">
    <location>
        <begin position="108"/>
        <end position="110"/>
    </location>
</feature>
<feature type="helix" evidence="9">
    <location>
        <begin position="117"/>
        <end position="119"/>
    </location>
</feature>
<feature type="helix" evidence="9">
    <location>
        <begin position="122"/>
        <end position="126"/>
    </location>
</feature>
<feature type="strand" evidence="9">
    <location>
        <begin position="130"/>
        <end position="134"/>
    </location>
</feature>
<feature type="helix" evidence="9">
    <location>
        <begin position="139"/>
        <end position="143"/>
    </location>
</feature>
<feature type="helix" evidence="9">
    <location>
        <begin position="153"/>
        <end position="168"/>
    </location>
</feature>
<feature type="helix" evidence="9">
    <location>
        <begin position="169"/>
        <end position="172"/>
    </location>
</feature>
<feature type="strand" evidence="9">
    <location>
        <begin position="174"/>
        <end position="184"/>
    </location>
</feature>
<feature type="helix" evidence="9">
    <location>
        <begin position="186"/>
        <end position="195"/>
    </location>
</feature>
<feature type="helix" evidence="9">
    <location>
        <begin position="198"/>
        <end position="200"/>
    </location>
</feature>
<feature type="strand" evidence="9">
    <location>
        <begin position="205"/>
        <end position="211"/>
    </location>
</feature>
<feature type="helix" evidence="9">
    <location>
        <begin position="220"/>
        <end position="234"/>
    </location>
</feature>
<feature type="helix" evidence="9">
    <location>
        <begin position="240"/>
        <end position="243"/>
    </location>
</feature>
<feature type="helix" evidence="9">
    <location>
        <begin position="248"/>
        <end position="263"/>
    </location>
</feature>
<feature type="helix" evidence="9">
    <location>
        <begin position="268"/>
        <end position="276"/>
    </location>
</feature>
<feature type="strand" evidence="9">
    <location>
        <begin position="290"/>
        <end position="293"/>
    </location>
</feature>
<feature type="helix" evidence="9">
    <location>
        <begin position="297"/>
        <end position="302"/>
    </location>
</feature>
<feature type="turn" evidence="9">
    <location>
        <begin position="303"/>
        <end position="308"/>
    </location>
</feature>
<feature type="strand" evidence="9">
    <location>
        <begin position="309"/>
        <end position="316"/>
    </location>
</feature>
<feature type="turn" evidence="9">
    <location>
        <begin position="317"/>
        <end position="320"/>
    </location>
</feature>
<feature type="helix" evidence="9">
    <location>
        <begin position="321"/>
        <end position="324"/>
    </location>
</feature>
<feature type="turn" evidence="8">
    <location>
        <begin position="325"/>
        <end position="328"/>
    </location>
</feature>
<feature type="helix" evidence="9">
    <location>
        <begin position="330"/>
        <end position="332"/>
    </location>
</feature>
<feature type="helix" evidence="9">
    <location>
        <begin position="335"/>
        <end position="344"/>
    </location>
</feature>
<feature type="helix" evidence="9">
    <location>
        <begin position="351"/>
        <end position="357"/>
    </location>
</feature>
<feature type="helix" evidence="9">
    <location>
        <begin position="364"/>
        <end position="376"/>
    </location>
</feature>
<feature type="helix" evidence="9">
    <location>
        <begin position="378"/>
        <end position="387"/>
    </location>
</feature>
<feature type="turn" evidence="9">
    <location>
        <begin position="388"/>
        <end position="390"/>
    </location>
</feature>
<feature type="strand" evidence="9">
    <location>
        <begin position="395"/>
        <end position="400"/>
    </location>
</feature>
<feature type="helix" evidence="9">
    <location>
        <begin position="406"/>
        <end position="409"/>
    </location>
</feature>
<feature type="strand" evidence="8">
    <location>
        <begin position="411"/>
        <end position="413"/>
    </location>
</feature>
<feature type="turn" evidence="9">
    <location>
        <begin position="415"/>
        <end position="418"/>
    </location>
</feature>
<feature type="helix" evidence="9">
    <location>
        <begin position="419"/>
        <end position="423"/>
    </location>
</feature>
<feature type="helix" evidence="9">
    <location>
        <begin position="426"/>
        <end position="428"/>
    </location>
</feature>
<feature type="helix" evidence="9">
    <location>
        <begin position="430"/>
        <end position="433"/>
    </location>
</feature>
<feature type="helix" evidence="9">
    <location>
        <begin position="439"/>
        <end position="455"/>
    </location>
</feature>
<feature type="turn" evidence="9">
    <location>
        <begin position="465"/>
        <end position="467"/>
    </location>
</feature>
<feature type="strand" evidence="9">
    <location>
        <begin position="469"/>
        <end position="473"/>
    </location>
</feature>
<feature type="strand" evidence="9">
    <location>
        <begin position="479"/>
        <end position="483"/>
    </location>
</feature>
<feature type="helix" evidence="9">
    <location>
        <begin position="486"/>
        <end position="490"/>
    </location>
</feature>
<feature type="turn" evidence="9">
    <location>
        <begin position="491"/>
        <end position="494"/>
    </location>
</feature>
<comment type="catalytic activity">
    <reaction evidence="4 5">
        <text>a carboxylic ester + H2O = an alcohol + a carboxylate + H(+)</text>
        <dbReference type="Rhea" id="RHEA:21164"/>
        <dbReference type="ChEBI" id="CHEBI:15377"/>
        <dbReference type="ChEBI" id="CHEBI:15378"/>
        <dbReference type="ChEBI" id="CHEBI:29067"/>
        <dbReference type="ChEBI" id="CHEBI:30879"/>
        <dbReference type="ChEBI" id="CHEBI:33308"/>
        <dbReference type="EC" id="3.1.1.1"/>
    </reaction>
</comment>
<comment type="biophysicochemical properties">
    <kinetics>
        <KM evidence="5">0.272 mM for p-nitrophenol acetate</KM>
        <KM evidence="5">0.164 mM for p-nitrophenol butyrate</KM>
        <KM evidence="5">0.198 mM for p-nitrophenol caprylate</KM>
        <KM evidence="5">0.468 mM for cyclic PET trimers</KM>
        <Vmax evidence="5">46.0 umol/min/mg enzyme with p-nitrophenol acetate as substrate</Vmax>
        <Vmax evidence="5">88.0 umol/min/mg enzyme with p-nitrophenol butyrate as substrate</Vmax>
        <Vmax evidence="5">64.0 umol/min/mg enzyme with p-nitrophenol caprylate as substrate</Vmax>
        <Vmax evidence="5">9.3 umol/min/mg enzyme with cyclic PET trimers as substrate</Vmax>
    </kinetics>
    <phDependence>
        <text evidence="5">Optimum pH is 6 with cyclic PET trimers as substrate (at 60 degrees Celsius).</text>
    </phDependence>
    <temperatureDependence>
        <text evidence="5">Optimum temperature is 60 degrees Celsius with cyclic PET trimers as substrate.</text>
    </temperatureDependence>
</comment>
<comment type="subcellular location">
    <subcellularLocation>
        <location evidence="5">Secreted</location>
    </subcellularLocation>
</comment>
<comment type="similarity">
    <text evidence="3">Belongs to the type-B carboxylesterase/lipase family.</text>
</comment>